<protein>
    <recommendedName>
        <fullName>Omega-theraphotoxin-Ba1c</fullName>
        <shortName>Omega-TRTX-Ba1c</shortName>
    </recommendedName>
    <alternativeName>
        <fullName evidence="6">Venom peptide Ba3</fullName>
    </alternativeName>
</protein>
<keyword id="KW-0108">Calcium channel impairing toxin</keyword>
<keyword id="KW-1015">Disulfide bond</keyword>
<keyword id="KW-0872">Ion channel impairing toxin</keyword>
<keyword id="KW-0528">Neurotoxin</keyword>
<keyword id="KW-0964">Secreted</keyword>
<keyword id="KW-0732">Signal</keyword>
<keyword id="KW-0800">Toxin</keyword>
<keyword id="KW-1218">Voltage-gated calcium channel impairing toxin</keyword>
<proteinExistence type="evidence at transcript level"/>
<organism>
    <name type="scientific">Brachypelma albiceps</name>
    <name type="common">Mexican golden redrump tarantula</name>
    <name type="synonym">Brachypelma ruhnaui</name>
    <dbReference type="NCBI Taxonomy" id="503929"/>
    <lineage>
        <taxon>Eukaryota</taxon>
        <taxon>Metazoa</taxon>
        <taxon>Ecdysozoa</taxon>
        <taxon>Arthropoda</taxon>
        <taxon>Chelicerata</taxon>
        <taxon>Arachnida</taxon>
        <taxon>Araneae</taxon>
        <taxon>Mygalomorphae</taxon>
        <taxon>Theraphosidae</taxon>
        <taxon>Brachypelma</taxon>
    </lineage>
</organism>
<comment type="function">
    <text evidence="3 4">Inhibits voltage-gated calcium channels (Cav) in rat cerebellar granule cells (By similarity). Has insecticidal activity (By similarity).</text>
</comment>
<comment type="subcellular location">
    <subcellularLocation>
        <location>Secreted</location>
    </subcellularLocation>
</comment>
<comment type="tissue specificity">
    <text>Expressed by the venom gland.</text>
</comment>
<comment type="similarity">
    <text evidence="7">Belongs to the neurotoxin 12 (Hwtx-2) family. 06 (TXP1) subfamily.</text>
</comment>
<evidence type="ECO:0000250" key="1"/>
<evidence type="ECO:0000250" key="2">
    <source>
        <dbReference type="UniProtKB" id="P0DL80"/>
    </source>
</evidence>
<evidence type="ECO:0000250" key="3">
    <source>
        <dbReference type="UniProtKB" id="P0DL81"/>
    </source>
</evidence>
<evidence type="ECO:0000250" key="4">
    <source>
        <dbReference type="UniProtKB" id="P85497"/>
    </source>
</evidence>
<evidence type="ECO:0000255" key="5"/>
<evidence type="ECO:0000303" key="6">
    <source>
    </source>
</evidence>
<evidence type="ECO:0000305" key="7"/>
<feature type="signal peptide" evidence="5">
    <location>
        <begin position="1"/>
        <end position="23"/>
    </location>
</feature>
<feature type="propeptide" id="PRO_0000425966" evidence="1">
    <location>
        <begin position="24"/>
        <end position="50"/>
    </location>
</feature>
<feature type="peptide" id="PRO_0000425967" description="Omega-theraphotoxin-Ba1c">
    <location>
        <begin position="51"/>
        <end position="89"/>
    </location>
</feature>
<feature type="disulfide bond" evidence="2">
    <location>
        <begin position="54"/>
        <end position="75"/>
    </location>
</feature>
<feature type="disulfide bond" evidence="2">
    <location>
        <begin position="58"/>
        <end position="81"/>
    </location>
</feature>
<feature type="disulfide bond" evidence="2">
    <location>
        <begin position="67"/>
        <end position="86"/>
    </location>
</feature>
<accession>P0DMD9</accession>
<accession>V5RFM6</accession>
<reference key="1">
    <citation type="journal article" date="2013" name="PLoS ONE">
        <title>A new theraphosid spider toxin causes early insect cell death by necrosis when expressed in vitro during recombinant baculovirus infection.</title>
        <authorList>
            <person name="Ardisson-Araujo D.M."/>
            <person name="Morgado Fda S."/>
            <person name="Schwartz E.F."/>
            <person name="Corzo G."/>
            <person name="Ribeiro B.M."/>
        </authorList>
    </citation>
    <scope>NUCLEOTIDE SEQUENCE [MRNA]</scope>
    <scope>FUNCTION</scope>
    <source>
        <tissue>Venom gland</tissue>
    </source>
</reference>
<name>TXP3_BRAAI</name>
<dbReference type="EMBL" id="KF638632">
    <property type="protein sequence ID" value="AHB33348.1"/>
    <property type="molecule type" value="mRNA"/>
</dbReference>
<dbReference type="SMR" id="P0DMD9"/>
<dbReference type="ArachnoServer" id="AS001892">
    <property type="toxin name" value="omega-theraphotoxin-Ba1c"/>
</dbReference>
<dbReference type="GO" id="GO:0005576">
    <property type="term" value="C:extracellular region"/>
    <property type="evidence" value="ECO:0007669"/>
    <property type="project" value="UniProtKB-SubCell"/>
</dbReference>
<dbReference type="GO" id="GO:0005246">
    <property type="term" value="F:calcium channel regulator activity"/>
    <property type="evidence" value="ECO:0007669"/>
    <property type="project" value="UniProtKB-KW"/>
</dbReference>
<dbReference type="GO" id="GO:0090729">
    <property type="term" value="F:toxin activity"/>
    <property type="evidence" value="ECO:0007669"/>
    <property type="project" value="UniProtKB-KW"/>
</dbReference>
<dbReference type="InterPro" id="IPR012625">
    <property type="entry name" value="Hwtx-2-like"/>
</dbReference>
<dbReference type="Pfam" id="PF08089">
    <property type="entry name" value="Toxin_20"/>
    <property type="match status" value="1"/>
</dbReference>
<dbReference type="SUPFAM" id="SSF57059">
    <property type="entry name" value="omega toxin-like"/>
    <property type="match status" value="1"/>
</dbReference>
<dbReference type="PROSITE" id="PS60022">
    <property type="entry name" value="HWTX_2"/>
    <property type="match status" value="1"/>
</dbReference>
<sequence>MRSLTLAAVLACSLLLVFHTSAAEEHEAQEGYLMNPGDTDTALATVDDERILECVFSCDIEKEGKPCKPKGEKKCTGGWKCKIKLCLKI</sequence>